<keyword id="KW-0012">Acyltransferase</keyword>
<keyword id="KW-0963">Cytoplasm</keyword>
<keyword id="KW-0408">Iron</keyword>
<keyword id="KW-0479">Metal-binding</keyword>
<keyword id="KW-0808">Transferase</keyword>
<keyword id="KW-0819">tRNA processing</keyword>
<accession>B9DYW7</accession>
<reference key="1">
    <citation type="submission" date="2005-09" db="EMBL/GenBank/DDBJ databases">
        <title>Complete genome sequence of Clostridium kluyveri and comparative genomics of Clostridia species.</title>
        <authorList>
            <person name="Inui M."/>
            <person name="Nonaka H."/>
            <person name="Shinoda Y."/>
            <person name="Ikenaga Y."/>
            <person name="Abe M."/>
            <person name="Naito K."/>
            <person name="Vertes A.A."/>
            <person name="Yukawa H."/>
        </authorList>
    </citation>
    <scope>NUCLEOTIDE SEQUENCE [LARGE SCALE GENOMIC DNA]</scope>
    <source>
        <strain>NBRC 12016</strain>
    </source>
</reference>
<evidence type="ECO:0000255" key="1">
    <source>
        <dbReference type="HAMAP-Rule" id="MF_01445"/>
    </source>
</evidence>
<organism>
    <name type="scientific">Clostridium kluyveri (strain NBRC 12016)</name>
    <dbReference type="NCBI Taxonomy" id="583346"/>
    <lineage>
        <taxon>Bacteria</taxon>
        <taxon>Bacillati</taxon>
        <taxon>Bacillota</taxon>
        <taxon>Clostridia</taxon>
        <taxon>Eubacteriales</taxon>
        <taxon>Clostridiaceae</taxon>
        <taxon>Clostridium</taxon>
    </lineage>
</organism>
<dbReference type="EC" id="2.3.1.234" evidence="1"/>
<dbReference type="EMBL" id="AP009049">
    <property type="protein sequence ID" value="BAH05442.1"/>
    <property type="molecule type" value="Genomic_DNA"/>
</dbReference>
<dbReference type="RefSeq" id="WP_011989015.1">
    <property type="nucleotide sequence ID" value="NC_011837.1"/>
</dbReference>
<dbReference type="SMR" id="B9DYW7"/>
<dbReference type="KEGG" id="ckr:CKR_0391"/>
<dbReference type="HOGENOM" id="CLU_023208_0_2_9"/>
<dbReference type="Proteomes" id="UP000007969">
    <property type="component" value="Chromosome"/>
</dbReference>
<dbReference type="GO" id="GO:0005737">
    <property type="term" value="C:cytoplasm"/>
    <property type="evidence" value="ECO:0007669"/>
    <property type="project" value="UniProtKB-SubCell"/>
</dbReference>
<dbReference type="GO" id="GO:0005506">
    <property type="term" value="F:iron ion binding"/>
    <property type="evidence" value="ECO:0007669"/>
    <property type="project" value="UniProtKB-UniRule"/>
</dbReference>
<dbReference type="GO" id="GO:0061711">
    <property type="term" value="F:N(6)-L-threonylcarbamoyladenine synthase activity"/>
    <property type="evidence" value="ECO:0007669"/>
    <property type="project" value="UniProtKB-EC"/>
</dbReference>
<dbReference type="GO" id="GO:0002949">
    <property type="term" value="P:tRNA threonylcarbamoyladenosine modification"/>
    <property type="evidence" value="ECO:0007669"/>
    <property type="project" value="UniProtKB-UniRule"/>
</dbReference>
<dbReference type="CDD" id="cd24133">
    <property type="entry name" value="ASKHA_NBD_TsaD_bac"/>
    <property type="match status" value="1"/>
</dbReference>
<dbReference type="FunFam" id="3.30.420.40:FF:000012">
    <property type="entry name" value="tRNA N6-adenosine threonylcarbamoyltransferase"/>
    <property type="match status" value="1"/>
</dbReference>
<dbReference type="FunFam" id="3.30.420.40:FF:000040">
    <property type="entry name" value="tRNA N6-adenosine threonylcarbamoyltransferase"/>
    <property type="match status" value="1"/>
</dbReference>
<dbReference type="Gene3D" id="3.30.420.40">
    <property type="match status" value="2"/>
</dbReference>
<dbReference type="HAMAP" id="MF_01445">
    <property type="entry name" value="TsaD"/>
    <property type="match status" value="1"/>
</dbReference>
<dbReference type="InterPro" id="IPR043129">
    <property type="entry name" value="ATPase_NBD"/>
</dbReference>
<dbReference type="InterPro" id="IPR000905">
    <property type="entry name" value="Gcp-like_dom"/>
</dbReference>
<dbReference type="InterPro" id="IPR017861">
    <property type="entry name" value="KAE1/TsaD"/>
</dbReference>
<dbReference type="InterPro" id="IPR017860">
    <property type="entry name" value="Peptidase_M22_CS"/>
</dbReference>
<dbReference type="InterPro" id="IPR022450">
    <property type="entry name" value="TsaD"/>
</dbReference>
<dbReference type="NCBIfam" id="TIGR00329">
    <property type="entry name" value="gcp_kae1"/>
    <property type="match status" value="1"/>
</dbReference>
<dbReference type="NCBIfam" id="TIGR03723">
    <property type="entry name" value="T6A_TsaD_YgjD"/>
    <property type="match status" value="1"/>
</dbReference>
<dbReference type="PANTHER" id="PTHR11735">
    <property type="entry name" value="TRNA N6-ADENOSINE THREONYLCARBAMOYLTRANSFERASE"/>
    <property type="match status" value="1"/>
</dbReference>
<dbReference type="PANTHER" id="PTHR11735:SF6">
    <property type="entry name" value="TRNA N6-ADENOSINE THREONYLCARBAMOYLTRANSFERASE, MITOCHONDRIAL"/>
    <property type="match status" value="1"/>
</dbReference>
<dbReference type="Pfam" id="PF00814">
    <property type="entry name" value="TsaD"/>
    <property type="match status" value="1"/>
</dbReference>
<dbReference type="PRINTS" id="PR00789">
    <property type="entry name" value="OSIALOPTASE"/>
</dbReference>
<dbReference type="SUPFAM" id="SSF53067">
    <property type="entry name" value="Actin-like ATPase domain"/>
    <property type="match status" value="2"/>
</dbReference>
<dbReference type="PROSITE" id="PS01016">
    <property type="entry name" value="GLYCOPROTEASE"/>
    <property type="match status" value="1"/>
</dbReference>
<sequence>MDKDLRILAIESSCDETSAAVVVNGRIVLSNIISSQIDIHKKFGGVVPEVASRKHIEVISVVVEQALEEAQITFKDIDAIGVTYGPGLVGALLVGLQYAKALSYALNKPLIGVNHIEGHISANFIQYKDLKPPFVCLVVSGGHTYLVYMKDYGKFEVLGQTRDDAAGEAYDKIARAIGLGYPGGPKVDKIAREGNPDAIKFPRANFHDNKTLDFSFSGLKSSVLNYLNQKSMKKEDINKADVAASFQKAVVSFLVDNSLRACKLKNVNKIAVAGGVASNTCLRETFKSQGSKNKVDVLFPEPILCTDNAAMIGSAAYFEYMRGNTSSLNLNAIPNLKLGER</sequence>
<proteinExistence type="inferred from homology"/>
<comment type="function">
    <text evidence="1">Required for the formation of a threonylcarbamoyl group on adenosine at position 37 (t(6)A37) in tRNAs that read codons beginning with adenine. Is involved in the transfer of the threonylcarbamoyl moiety of threonylcarbamoyl-AMP (TC-AMP) to the N6 group of A37, together with TsaE and TsaB. TsaD likely plays a direct catalytic role in this reaction.</text>
</comment>
<comment type="catalytic activity">
    <reaction evidence="1">
        <text>L-threonylcarbamoyladenylate + adenosine(37) in tRNA = N(6)-L-threonylcarbamoyladenosine(37) in tRNA + AMP + H(+)</text>
        <dbReference type="Rhea" id="RHEA:37059"/>
        <dbReference type="Rhea" id="RHEA-COMP:10162"/>
        <dbReference type="Rhea" id="RHEA-COMP:10163"/>
        <dbReference type="ChEBI" id="CHEBI:15378"/>
        <dbReference type="ChEBI" id="CHEBI:73682"/>
        <dbReference type="ChEBI" id="CHEBI:74411"/>
        <dbReference type="ChEBI" id="CHEBI:74418"/>
        <dbReference type="ChEBI" id="CHEBI:456215"/>
        <dbReference type="EC" id="2.3.1.234"/>
    </reaction>
</comment>
<comment type="cofactor">
    <cofactor evidence="1">
        <name>Fe(2+)</name>
        <dbReference type="ChEBI" id="CHEBI:29033"/>
    </cofactor>
    <text evidence="1">Binds 1 Fe(2+) ion per subunit.</text>
</comment>
<comment type="subcellular location">
    <subcellularLocation>
        <location evidence="1">Cytoplasm</location>
    </subcellularLocation>
</comment>
<comment type="similarity">
    <text evidence="1">Belongs to the KAE1 / TsaD family.</text>
</comment>
<name>TSAD_CLOK1</name>
<gene>
    <name evidence="1" type="primary">tsaD</name>
    <name type="synonym">gcp</name>
    <name type="ordered locus">CKR_0391</name>
</gene>
<feature type="chain" id="PRO_1000184958" description="tRNA N6-adenosine threonylcarbamoyltransferase">
    <location>
        <begin position="1"/>
        <end position="341"/>
    </location>
</feature>
<feature type="binding site" evidence="1">
    <location>
        <position position="115"/>
    </location>
    <ligand>
        <name>Fe cation</name>
        <dbReference type="ChEBI" id="CHEBI:24875"/>
    </ligand>
</feature>
<feature type="binding site" evidence="1">
    <location>
        <position position="119"/>
    </location>
    <ligand>
        <name>Fe cation</name>
        <dbReference type="ChEBI" id="CHEBI:24875"/>
    </ligand>
</feature>
<feature type="binding site" evidence="1">
    <location>
        <begin position="138"/>
        <end position="142"/>
    </location>
    <ligand>
        <name>substrate</name>
    </ligand>
</feature>
<feature type="binding site" evidence="1">
    <location>
        <position position="171"/>
    </location>
    <ligand>
        <name>substrate</name>
    </ligand>
</feature>
<feature type="binding site" evidence="1">
    <location>
        <position position="184"/>
    </location>
    <ligand>
        <name>substrate</name>
    </ligand>
</feature>
<feature type="binding site" evidence="1">
    <location>
        <position position="188"/>
    </location>
    <ligand>
        <name>substrate</name>
    </ligand>
</feature>
<feature type="binding site" evidence="1">
    <location>
        <position position="279"/>
    </location>
    <ligand>
        <name>substrate</name>
    </ligand>
</feature>
<feature type="binding site" evidence="1">
    <location>
        <position position="307"/>
    </location>
    <ligand>
        <name>Fe cation</name>
        <dbReference type="ChEBI" id="CHEBI:24875"/>
    </ligand>
</feature>
<protein>
    <recommendedName>
        <fullName evidence="1">tRNA N6-adenosine threonylcarbamoyltransferase</fullName>
        <ecNumber evidence="1">2.3.1.234</ecNumber>
    </recommendedName>
    <alternativeName>
        <fullName evidence="1">N6-L-threonylcarbamoyladenine synthase</fullName>
        <shortName evidence="1">t(6)A synthase</shortName>
    </alternativeName>
    <alternativeName>
        <fullName evidence="1">t(6)A37 threonylcarbamoyladenosine biosynthesis protein TsaD</fullName>
    </alternativeName>
    <alternativeName>
        <fullName evidence="1">tRNA threonylcarbamoyladenosine biosynthesis protein TsaD</fullName>
    </alternativeName>
</protein>